<keyword id="KW-0028">Amino-acid biosynthesis</keyword>
<keyword id="KW-0055">Arginine biosynthesis</keyword>
<keyword id="KW-0067">ATP-binding</keyword>
<keyword id="KW-0436">Ligase</keyword>
<keyword id="KW-0460">Magnesium</keyword>
<keyword id="KW-0464">Manganese</keyword>
<keyword id="KW-0479">Metal-binding</keyword>
<keyword id="KW-0547">Nucleotide-binding</keyword>
<keyword id="KW-0665">Pyrimidine biosynthesis</keyword>
<keyword id="KW-1185">Reference proteome</keyword>
<keyword id="KW-0677">Repeat</keyword>
<evidence type="ECO:0000255" key="1">
    <source>
        <dbReference type="HAMAP-Rule" id="MF_01210"/>
    </source>
</evidence>
<sequence>MPKRTDIKSVMVIGSGPIVIGQAAEFDYSGTQACRVLREEGIRVILVNSNPATIMTDPEMADATYIEPISTPILEQIIAKERPDALLPTLGGQTALNAAMALGEAGVLKKYNVELIGASLDAIDRGEDRELFKKVVEEAGAESARSDIAHSLEEVDKIAEKFGYPLVVRPSFTMGGLGSGIAHDEDELHRIAGAGIHYSPTDHVLIEESIEGWKEYELELMRDKKDNVLVVCPIQNVDPVGVHTGDSITVAPVFTLTDREYQKLRDIGIAIIRGVGVDTGGCNIQFAVNPDTGRIIVIEMNPRVSRSSALASKATGFPIAKIATKLALGYTLDEIQNDITQSTPASFEPTIDYVVTKVPRFAFEKFPGADPTLTTSMKSVGEAMALAGNFQESLGKAMRSIDKRHMGFNWDGDKPSEDEVSQLLDAIKVPTEHRYLQIQRALWGGATEEQIFAATKIDPWFIRQFALINETALEVKNAEKLTRKLLKKAKLAGLSDLQIAHLRRLGDEGENTIRELRWSYDLRPVFKTVDTCAAEFDAATPYYYSCYADETELRPRDREAVIILGSGPNRIGQGIEFDYTCVHAVQELGKNYDTIMVNCNPETVSTDYDMSDRLYFEPLTFEDVLEIYEAEKKMGPIKGVIVQLGGQTPLSLAARLKAAGVPILGTTPESIDLAENRELFGEVLKKADMNAPRYGTALSLDEAREAAHAIGYPVLVRPSYVLGGRGMEIVYDDAQLRKYVDRALKEAQADTVVSGRLPSPLLIDKFLQDAVEIDVDALFDGEELYIGGIMEHVEEAGVHSGDAACTLPPSTLSDDQIRRLREGTYAIAKGCGVQGLINVQYAFMANTLYVIEANPRASRTVPFASKATGVALAKAAARIMVGETIQQQRDNGLLLPHGDGGDIHRGQQVAVKESVLPFKRFRTPLGKTVDVLLGPEMRSTGEVMGFDRDFPHAFAKSQLAAYEGGLPTSGNVFISVNDTDKRQLPLFAARLVELGFNIWATEGTASVLRRYGIDSKIVDKISVRMDSDPDDPITTYHAEGSVGKNVVQLIEEGAIDLILNTPNSRGSRSDGYAIRSAAIAADLPQFTTMTEFSAVLMAIEAVRNNDYQIMSIQDHSTQLFELESRD</sequence>
<name>CARB_BIFAA</name>
<dbReference type="EC" id="6.3.4.16" evidence="1"/>
<dbReference type="EC" id="6.3.5.5" evidence="1"/>
<dbReference type="EMBL" id="AP009256">
    <property type="protein sequence ID" value="BAF39317.1"/>
    <property type="molecule type" value="Genomic_DNA"/>
</dbReference>
<dbReference type="RefSeq" id="WP_011742980.1">
    <property type="nucleotide sequence ID" value="NC_008618.1"/>
</dbReference>
<dbReference type="SMR" id="A1A0T4"/>
<dbReference type="STRING" id="367928.BAD_0536"/>
<dbReference type="PaxDb" id="1680-BADO_0549"/>
<dbReference type="GeneID" id="4557555"/>
<dbReference type="KEGG" id="bad:BAD_0536"/>
<dbReference type="HOGENOM" id="CLU_000513_1_0_11"/>
<dbReference type="UniPathway" id="UPA00068">
    <property type="reaction ID" value="UER00171"/>
</dbReference>
<dbReference type="UniPathway" id="UPA00070">
    <property type="reaction ID" value="UER00115"/>
</dbReference>
<dbReference type="Proteomes" id="UP000008702">
    <property type="component" value="Chromosome"/>
</dbReference>
<dbReference type="GO" id="GO:0005737">
    <property type="term" value="C:cytoplasm"/>
    <property type="evidence" value="ECO:0007669"/>
    <property type="project" value="TreeGrafter"/>
</dbReference>
<dbReference type="GO" id="GO:0005524">
    <property type="term" value="F:ATP binding"/>
    <property type="evidence" value="ECO:0007669"/>
    <property type="project" value="UniProtKB-UniRule"/>
</dbReference>
<dbReference type="GO" id="GO:0004087">
    <property type="term" value="F:carbamoyl-phosphate synthase (ammonia) activity"/>
    <property type="evidence" value="ECO:0007669"/>
    <property type="project" value="RHEA"/>
</dbReference>
<dbReference type="GO" id="GO:0004088">
    <property type="term" value="F:carbamoyl-phosphate synthase (glutamine-hydrolyzing) activity"/>
    <property type="evidence" value="ECO:0007669"/>
    <property type="project" value="UniProtKB-UniRule"/>
</dbReference>
<dbReference type="GO" id="GO:0046872">
    <property type="term" value="F:metal ion binding"/>
    <property type="evidence" value="ECO:0007669"/>
    <property type="project" value="UniProtKB-KW"/>
</dbReference>
<dbReference type="GO" id="GO:0044205">
    <property type="term" value="P:'de novo' UMP biosynthetic process"/>
    <property type="evidence" value="ECO:0007669"/>
    <property type="project" value="UniProtKB-UniRule"/>
</dbReference>
<dbReference type="GO" id="GO:0006541">
    <property type="term" value="P:glutamine metabolic process"/>
    <property type="evidence" value="ECO:0007669"/>
    <property type="project" value="TreeGrafter"/>
</dbReference>
<dbReference type="GO" id="GO:0006526">
    <property type="term" value="P:L-arginine biosynthetic process"/>
    <property type="evidence" value="ECO:0007669"/>
    <property type="project" value="UniProtKB-UniRule"/>
</dbReference>
<dbReference type="CDD" id="cd01424">
    <property type="entry name" value="MGS_CPS_II"/>
    <property type="match status" value="1"/>
</dbReference>
<dbReference type="FunFam" id="1.10.1030.10:FF:000002">
    <property type="entry name" value="Carbamoyl-phosphate synthase large chain"/>
    <property type="match status" value="1"/>
</dbReference>
<dbReference type="FunFam" id="3.30.470.20:FF:000007">
    <property type="entry name" value="Carbamoyl-phosphate synthase large chain"/>
    <property type="match status" value="1"/>
</dbReference>
<dbReference type="FunFam" id="3.30.470.20:FF:000014">
    <property type="entry name" value="Carbamoyl-phosphate synthase large chain"/>
    <property type="match status" value="1"/>
</dbReference>
<dbReference type="FunFam" id="3.40.50.20:FF:000001">
    <property type="entry name" value="Carbamoyl-phosphate synthase large chain"/>
    <property type="match status" value="1"/>
</dbReference>
<dbReference type="FunFam" id="3.40.50.20:FF:000002">
    <property type="entry name" value="Carbamoyl-phosphate synthase large chain"/>
    <property type="match status" value="1"/>
</dbReference>
<dbReference type="Gene3D" id="3.40.50.20">
    <property type="match status" value="2"/>
</dbReference>
<dbReference type="Gene3D" id="3.30.1490.20">
    <property type="entry name" value="ATP-grasp fold, A domain"/>
    <property type="match status" value="1"/>
</dbReference>
<dbReference type="Gene3D" id="3.30.470.20">
    <property type="entry name" value="ATP-grasp fold, B domain"/>
    <property type="match status" value="2"/>
</dbReference>
<dbReference type="Gene3D" id="1.10.1030.10">
    <property type="entry name" value="Carbamoyl-phosphate synthetase, large subunit oligomerisation domain"/>
    <property type="match status" value="1"/>
</dbReference>
<dbReference type="Gene3D" id="3.40.50.1380">
    <property type="entry name" value="Methylglyoxal synthase-like domain"/>
    <property type="match status" value="1"/>
</dbReference>
<dbReference type="HAMAP" id="MF_01210_B">
    <property type="entry name" value="CPSase_L_chain_B"/>
    <property type="match status" value="1"/>
</dbReference>
<dbReference type="InterPro" id="IPR011761">
    <property type="entry name" value="ATP-grasp"/>
</dbReference>
<dbReference type="InterPro" id="IPR013815">
    <property type="entry name" value="ATP_grasp_subdomain_1"/>
</dbReference>
<dbReference type="InterPro" id="IPR006275">
    <property type="entry name" value="CarbamoylP_synth_lsu"/>
</dbReference>
<dbReference type="InterPro" id="IPR005480">
    <property type="entry name" value="CarbamoylP_synth_lsu_oligo"/>
</dbReference>
<dbReference type="InterPro" id="IPR036897">
    <property type="entry name" value="CarbamoylP_synth_lsu_oligo_sf"/>
</dbReference>
<dbReference type="InterPro" id="IPR005479">
    <property type="entry name" value="CbamoylP_synth_lsu-like_ATP-bd"/>
</dbReference>
<dbReference type="InterPro" id="IPR005483">
    <property type="entry name" value="CbamoylP_synth_lsu_CPSase_dom"/>
</dbReference>
<dbReference type="InterPro" id="IPR011607">
    <property type="entry name" value="MGS-like_dom"/>
</dbReference>
<dbReference type="InterPro" id="IPR036914">
    <property type="entry name" value="MGS-like_dom_sf"/>
</dbReference>
<dbReference type="InterPro" id="IPR033937">
    <property type="entry name" value="MGS_CPS_CarB"/>
</dbReference>
<dbReference type="InterPro" id="IPR016185">
    <property type="entry name" value="PreATP-grasp_dom_sf"/>
</dbReference>
<dbReference type="NCBIfam" id="TIGR01369">
    <property type="entry name" value="CPSaseII_lrg"/>
    <property type="match status" value="1"/>
</dbReference>
<dbReference type="NCBIfam" id="NF003671">
    <property type="entry name" value="PRK05294.1"/>
    <property type="match status" value="1"/>
</dbReference>
<dbReference type="NCBIfam" id="NF009455">
    <property type="entry name" value="PRK12815.1"/>
    <property type="match status" value="1"/>
</dbReference>
<dbReference type="PANTHER" id="PTHR11405:SF53">
    <property type="entry name" value="CARBAMOYL-PHOSPHATE SYNTHASE [AMMONIA], MITOCHONDRIAL"/>
    <property type="match status" value="1"/>
</dbReference>
<dbReference type="PANTHER" id="PTHR11405">
    <property type="entry name" value="CARBAMOYLTRANSFERASE FAMILY MEMBER"/>
    <property type="match status" value="1"/>
</dbReference>
<dbReference type="Pfam" id="PF02786">
    <property type="entry name" value="CPSase_L_D2"/>
    <property type="match status" value="2"/>
</dbReference>
<dbReference type="Pfam" id="PF02787">
    <property type="entry name" value="CPSase_L_D3"/>
    <property type="match status" value="1"/>
</dbReference>
<dbReference type="Pfam" id="PF02142">
    <property type="entry name" value="MGS"/>
    <property type="match status" value="1"/>
</dbReference>
<dbReference type="PRINTS" id="PR00098">
    <property type="entry name" value="CPSASE"/>
</dbReference>
<dbReference type="SMART" id="SM01096">
    <property type="entry name" value="CPSase_L_D3"/>
    <property type="match status" value="1"/>
</dbReference>
<dbReference type="SMART" id="SM00851">
    <property type="entry name" value="MGS"/>
    <property type="match status" value="1"/>
</dbReference>
<dbReference type="SUPFAM" id="SSF48108">
    <property type="entry name" value="Carbamoyl phosphate synthetase, large subunit connection domain"/>
    <property type="match status" value="1"/>
</dbReference>
<dbReference type="SUPFAM" id="SSF56059">
    <property type="entry name" value="Glutathione synthetase ATP-binding domain-like"/>
    <property type="match status" value="2"/>
</dbReference>
<dbReference type="SUPFAM" id="SSF52335">
    <property type="entry name" value="Methylglyoxal synthase-like"/>
    <property type="match status" value="1"/>
</dbReference>
<dbReference type="SUPFAM" id="SSF52440">
    <property type="entry name" value="PreATP-grasp domain"/>
    <property type="match status" value="2"/>
</dbReference>
<dbReference type="PROSITE" id="PS50975">
    <property type="entry name" value="ATP_GRASP"/>
    <property type="match status" value="2"/>
</dbReference>
<dbReference type="PROSITE" id="PS00866">
    <property type="entry name" value="CPSASE_1"/>
    <property type="match status" value="2"/>
</dbReference>
<dbReference type="PROSITE" id="PS00867">
    <property type="entry name" value="CPSASE_2"/>
    <property type="match status" value="2"/>
</dbReference>
<dbReference type="PROSITE" id="PS51855">
    <property type="entry name" value="MGS"/>
    <property type="match status" value="1"/>
</dbReference>
<accession>A1A0T4</accession>
<feature type="chain" id="PRO_1000066342" description="Carbamoyl phosphate synthase large chain">
    <location>
        <begin position="1"/>
        <end position="1126"/>
    </location>
</feature>
<feature type="domain" description="ATP-grasp 1" evidence="1">
    <location>
        <begin position="133"/>
        <end position="328"/>
    </location>
</feature>
<feature type="domain" description="ATP-grasp 2" evidence="1">
    <location>
        <begin position="681"/>
        <end position="881"/>
    </location>
</feature>
<feature type="domain" description="MGS-like" evidence="1">
    <location>
        <begin position="964"/>
        <end position="1126"/>
    </location>
</feature>
<feature type="region of interest" description="Carboxyphosphate synthetic domain" evidence="1">
    <location>
        <begin position="1"/>
        <end position="402"/>
    </location>
</feature>
<feature type="region of interest" description="Oligomerization domain" evidence="1">
    <location>
        <begin position="403"/>
        <end position="551"/>
    </location>
</feature>
<feature type="region of interest" description="Carbamoyl phosphate synthetic domain" evidence="1">
    <location>
        <begin position="552"/>
        <end position="962"/>
    </location>
</feature>
<feature type="region of interest" description="Allosteric domain" evidence="1">
    <location>
        <begin position="963"/>
        <end position="1126"/>
    </location>
</feature>
<feature type="binding site" evidence="1">
    <location>
        <position position="129"/>
    </location>
    <ligand>
        <name>ATP</name>
        <dbReference type="ChEBI" id="CHEBI:30616"/>
        <label>1</label>
    </ligand>
</feature>
<feature type="binding site" evidence="1">
    <location>
        <position position="169"/>
    </location>
    <ligand>
        <name>ATP</name>
        <dbReference type="ChEBI" id="CHEBI:30616"/>
        <label>1</label>
    </ligand>
</feature>
<feature type="binding site" evidence="1">
    <location>
        <position position="175"/>
    </location>
    <ligand>
        <name>ATP</name>
        <dbReference type="ChEBI" id="CHEBI:30616"/>
        <label>1</label>
    </ligand>
</feature>
<feature type="binding site" evidence="1">
    <location>
        <position position="176"/>
    </location>
    <ligand>
        <name>ATP</name>
        <dbReference type="ChEBI" id="CHEBI:30616"/>
        <label>1</label>
    </ligand>
</feature>
<feature type="binding site" evidence="1">
    <location>
        <position position="208"/>
    </location>
    <ligand>
        <name>ATP</name>
        <dbReference type="ChEBI" id="CHEBI:30616"/>
        <label>1</label>
    </ligand>
</feature>
<feature type="binding site" evidence="1">
    <location>
        <position position="210"/>
    </location>
    <ligand>
        <name>ATP</name>
        <dbReference type="ChEBI" id="CHEBI:30616"/>
        <label>1</label>
    </ligand>
</feature>
<feature type="binding site" evidence="1">
    <location>
        <position position="215"/>
    </location>
    <ligand>
        <name>ATP</name>
        <dbReference type="ChEBI" id="CHEBI:30616"/>
        <label>1</label>
    </ligand>
</feature>
<feature type="binding site" evidence="1">
    <location>
        <position position="241"/>
    </location>
    <ligand>
        <name>ATP</name>
        <dbReference type="ChEBI" id="CHEBI:30616"/>
        <label>1</label>
    </ligand>
</feature>
<feature type="binding site" evidence="1">
    <location>
        <position position="242"/>
    </location>
    <ligand>
        <name>ATP</name>
        <dbReference type="ChEBI" id="CHEBI:30616"/>
        <label>1</label>
    </ligand>
</feature>
<feature type="binding site" evidence="1">
    <location>
        <position position="243"/>
    </location>
    <ligand>
        <name>ATP</name>
        <dbReference type="ChEBI" id="CHEBI:30616"/>
        <label>1</label>
    </ligand>
</feature>
<feature type="binding site" evidence="1">
    <location>
        <position position="285"/>
    </location>
    <ligand>
        <name>ATP</name>
        <dbReference type="ChEBI" id="CHEBI:30616"/>
        <label>1</label>
    </ligand>
</feature>
<feature type="binding site" evidence="1">
    <location>
        <position position="285"/>
    </location>
    <ligand>
        <name>Mg(2+)</name>
        <dbReference type="ChEBI" id="CHEBI:18420"/>
        <label>1</label>
    </ligand>
</feature>
<feature type="binding site" evidence="1">
    <location>
        <position position="285"/>
    </location>
    <ligand>
        <name>Mn(2+)</name>
        <dbReference type="ChEBI" id="CHEBI:29035"/>
        <label>1</label>
    </ligand>
</feature>
<feature type="binding site" evidence="1">
    <location>
        <position position="299"/>
    </location>
    <ligand>
        <name>ATP</name>
        <dbReference type="ChEBI" id="CHEBI:30616"/>
        <label>1</label>
    </ligand>
</feature>
<feature type="binding site" evidence="1">
    <location>
        <position position="299"/>
    </location>
    <ligand>
        <name>Mg(2+)</name>
        <dbReference type="ChEBI" id="CHEBI:18420"/>
        <label>1</label>
    </ligand>
</feature>
<feature type="binding site" evidence="1">
    <location>
        <position position="299"/>
    </location>
    <ligand>
        <name>Mg(2+)</name>
        <dbReference type="ChEBI" id="CHEBI:18420"/>
        <label>2</label>
    </ligand>
</feature>
<feature type="binding site" evidence="1">
    <location>
        <position position="299"/>
    </location>
    <ligand>
        <name>Mn(2+)</name>
        <dbReference type="ChEBI" id="CHEBI:29035"/>
        <label>1</label>
    </ligand>
</feature>
<feature type="binding site" evidence="1">
    <location>
        <position position="299"/>
    </location>
    <ligand>
        <name>Mn(2+)</name>
        <dbReference type="ChEBI" id="CHEBI:29035"/>
        <label>2</label>
    </ligand>
</feature>
<feature type="binding site" evidence="1">
    <location>
        <position position="301"/>
    </location>
    <ligand>
        <name>Mg(2+)</name>
        <dbReference type="ChEBI" id="CHEBI:18420"/>
        <label>2</label>
    </ligand>
</feature>
<feature type="binding site" evidence="1">
    <location>
        <position position="301"/>
    </location>
    <ligand>
        <name>Mn(2+)</name>
        <dbReference type="ChEBI" id="CHEBI:29035"/>
        <label>2</label>
    </ligand>
</feature>
<feature type="binding site" evidence="1">
    <location>
        <position position="717"/>
    </location>
    <ligand>
        <name>ATP</name>
        <dbReference type="ChEBI" id="CHEBI:30616"/>
        <label>2</label>
    </ligand>
</feature>
<feature type="binding site" evidence="1">
    <location>
        <position position="765"/>
    </location>
    <ligand>
        <name>ATP</name>
        <dbReference type="ChEBI" id="CHEBI:30616"/>
        <label>2</label>
    </ligand>
</feature>
<feature type="binding site" evidence="1">
    <location>
        <position position="767"/>
    </location>
    <ligand>
        <name>ATP</name>
        <dbReference type="ChEBI" id="CHEBI:30616"/>
        <label>2</label>
    </ligand>
</feature>
<feature type="binding site" evidence="1">
    <location>
        <position position="772"/>
    </location>
    <ligand>
        <name>ATP</name>
        <dbReference type="ChEBI" id="CHEBI:30616"/>
        <label>2</label>
    </ligand>
</feature>
<feature type="binding site" evidence="1">
    <location>
        <position position="797"/>
    </location>
    <ligand>
        <name>ATP</name>
        <dbReference type="ChEBI" id="CHEBI:30616"/>
        <label>2</label>
    </ligand>
</feature>
<feature type="binding site" evidence="1">
    <location>
        <position position="798"/>
    </location>
    <ligand>
        <name>ATP</name>
        <dbReference type="ChEBI" id="CHEBI:30616"/>
        <label>2</label>
    </ligand>
</feature>
<feature type="binding site" evidence="1">
    <location>
        <position position="799"/>
    </location>
    <ligand>
        <name>ATP</name>
        <dbReference type="ChEBI" id="CHEBI:30616"/>
        <label>2</label>
    </ligand>
</feature>
<feature type="binding site" evidence="1">
    <location>
        <position position="800"/>
    </location>
    <ligand>
        <name>ATP</name>
        <dbReference type="ChEBI" id="CHEBI:30616"/>
        <label>2</label>
    </ligand>
</feature>
<feature type="binding site" evidence="1">
    <location>
        <position position="840"/>
    </location>
    <ligand>
        <name>ATP</name>
        <dbReference type="ChEBI" id="CHEBI:30616"/>
        <label>2</label>
    </ligand>
</feature>
<feature type="binding site" evidence="1">
    <location>
        <position position="840"/>
    </location>
    <ligand>
        <name>Mg(2+)</name>
        <dbReference type="ChEBI" id="CHEBI:18420"/>
        <label>3</label>
    </ligand>
</feature>
<feature type="binding site" evidence="1">
    <location>
        <position position="840"/>
    </location>
    <ligand>
        <name>Mn(2+)</name>
        <dbReference type="ChEBI" id="CHEBI:29035"/>
        <label>3</label>
    </ligand>
</feature>
<feature type="binding site" evidence="1">
    <location>
        <position position="852"/>
    </location>
    <ligand>
        <name>ATP</name>
        <dbReference type="ChEBI" id="CHEBI:30616"/>
        <label>2</label>
    </ligand>
</feature>
<feature type="binding site" evidence="1">
    <location>
        <position position="852"/>
    </location>
    <ligand>
        <name>Mg(2+)</name>
        <dbReference type="ChEBI" id="CHEBI:18420"/>
        <label>3</label>
    </ligand>
</feature>
<feature type="binding site" evidence="1">
    <location>
        <position position="852"/>
    </location>
    <ligand>
        <name>Mg(2+)</name>
        <dbReference type="ChEBI" id="CHEBI:18420"/>
        <label>4</label>
    </ligand>
</feature>
<feature type="binding site" evidence="1">
    <location>
        <position position="852"/>
    </location>
    <ligand>
        <name>Mn(2+)</name>
        <dbReference type="ChEBI" id="CHEBI:29035"/>
        <label>3</label>
    </ligand>
</feature>
<feature type="binding site" evidence="1">
    <location>
        <position position="852"/>
    </location>
    <ligand>
        <name>Mn(2+)</name>
        <dbReference type="ChEBI" id="CHEBI:29035"/>
        <label>4</label>
    </ligand>
</feature>
<feature type="binding site" evidence="1">
    <location>
        <position position="854"/>
    </location>
    <ligand>
        <name>Mg(2+)</name>
        <dbReference type="ChEBI" id="CHEBI:18420"/>
        <label>4</label>
    </ligand>
</feature>
<feature type="binding site" evidence="1">
    <location>
        <position position="854"/>
    </location>
    <ligand>
        <name>Mn(2+)</name>
        <dbReference type="ChEBI" id="CHEBI:29035"/>
        <label>4</label>
    </ligand>
</feature>
<reference key="1">
    <citation type="submission" date="2006-12" db="EMBL/GenBank/DDBJ databases">
        <title>Bifidobacterium adolescentis complete genome sequence.</title>
        <authorList>
            <person name="Suzuki T."/>
            <person name="Tsuda Y."/>
            <person name="Kanou N."/>
            <person name="Inoue T."/>
            <person name="Kumazaki K."/>
            <person name="Nagano S."/>
            <person name="Hirai S."/>
            <person name="Tanaka K."/>
            <person name="Watanabe K."/>
        </authorList>
    </citation>
    <scope>NUCLEOTIDE SEQUENCE [LARGE SCALE GENOMIC DNA]</scope>
    <source>
        <strain>ATCC 15703 / DSM 20083 / NCTC 11814 / E194a</strain>
    </source>
</reference>
<gene>
    <name evidence="1" type="primary">carB</name>
    <name type="ordered locus">BAD_0536</name>
</gene>
<protein>
    <recommendedName>
        <fullName evidence="1">Carbamoyl phosphate synthase large chain</fullName>
        <ecNumber evidence="1">6.3.4.16</ecNumber>
        <ecNumber evidence="1">6.3.5.5</ecNumber>
    </recommendedName>
    <alternativeName>
        <fullName evidence="1">Carbamoyl phosphate synthetase ammonia chain</fullName>
    </alternativeName>
</protein>
<organism>
    <name type="scientific">Bifidobacterium adolescentis (strain ATCC 15703 / DSM 20083 / NCTC 11814 / E194a)</name>
    <dbReference type="NCBI Taxonomy" id="367928"/>
    <lineage>
        <taxon>Bacteria</taxon>
        <taxon>Bacillati</taxon>
        <taxon>Actinomycetota</taxon>
        <taxon>Actinomycetes</taxon>
        <taxon>Bifidobacteriales</taxon>
        <taxon>Bifidobacteriaceae</taxon>
        <taxon>Bifidobacterium</taxon>
    </lineage>
</organism>
<proteinExistence type="inferred from homology"/>
<comment type="function">
    <text evidence="1">Large subunit of the glutamine-dependent carbamoyl phosphate synthetase (CPSase). CPSase catalyzes the formation of carbamoyl phosphate from the ammonia moiety of glutamine, carbonate, and phosphate donated by ATP, constituting the first step of 2 biosynthetic pathways, one leading to arginine and/or urea and the other to pyrimidine nucleotides. The large subunit (synthetase) binds the substrates ammonia (free or transferred from glutamine from the small subunit), hydrogencarbonate and ATP and carries out an ATP-coupled ligase reaction, activating hydrogencarbonate by forming carboxy phosphate which reacts with ammonia to form carbamoyl phosphate.</text>
</comment>
<comment type="catalytic activity">
    <reaction evidence="1">
        <text>hydrogencarbonate + L-glutamine + 2 ATP + H2O = carbamoyl phosphate + L-glutamate + 2 ADP + phosphate + 2 H(+)</text>
        <dbReference type="Rhea" id="RHEA:18633"/>
        <dbReference type="ChEBI" id="CHEBI:15377"/>
        <dbReference type="ChEBI" id="CHEBI:15378"/>
        <dbReference type="ChEBI" id="CHEBI:17544"/>
        <dbReference type="ChEBI" id="CHEBI:29985"/>
        <dbReference type="ChEBI" id="CHEBI:30616"/>
        <dbReference type="ChEBI" id="CHEBI:43474"/>
        <dbReference type="ChEBI" id="CHEBI:58228"/>
        <dbReference type="ChEBI" id="CHEBI:58359"/>
        <dbReference type="ChEBI" id="CHEBI:456216"/>
        <dbReference type="EC" id="6.3.5.5"/>
    </reaction>
</comment>
<comment type="catalytic activity">
    <molecule>Carbamoyl phosphate synthase large chain</molecule>
    <reaction evidence="1">
        <text>hydrogencarbonate + NH4(+) + 2 ATP = carbamoyl phosphate + 2 ADP + phosphate + 2 H(+)</text>
        <dbReference type="Rhea" id="RHEA:18029"/>
        <dbReference type="ChEBI" id="CHEBI:15378"/>
        <dbReference type="ChEBI" id="CHEBI:17544"/>
        <dbReference type="ChEBI" id="CHEBI:28938"/>
        <dbReference type="ChEBI" id="CHEBI:30616"/>
        <dbReference type="ChEBI" id="CHEBI:43474"/>
        <dbReference type="ChEBI" id="CHEBI:58228"/>
        <dbReference type="ChEBI" id="CHEBI:456216"/>
        <dbReference type="EC" id="6.3.4.16"/>
    </reaction>
</comment>
<comment type="cofactor">
    <cofactor evidence="1">
        <name>Mg(2+)</name>
        <dbReference type="ChEBI" id="CHEBI:18420"/>
    </cofactor>
    <cofactor evidence="1">
        <name>Mn(2+)</name>
        <dbReference type="ChEBI" id="CHEBI:29035"/>
    </cofactor>
    <text evidence="1">Binds 4 Mg(2+) or Mn(2+) ions per subunit.</text>
</comment>
<comment type="pathway">
    <text evidence="1">Amino-acid biosynthesis; L-arginine biosynthesis; carbamoyl phosphate from bicarbonate: step 1/1.</text>
</comment>
<comment type="pathway">
    <text evidence="1">Pyrimidine metabolism; UMP biosynthesis via de novo pathway; (S)-dihydroorotate from bicarbonate: step 1/3.</text>
</comment>
<comment type="subunit">
    <text evidence="1">Composed of two chains; the small (or glutamine) chain promotes the hydrolysis of glutamine to ammonia, which is used by the large (or ammonia) chain to synthesize carbamoyl phosphate. Tetramer of heterodimers (alpha,beta)4.</text>
</comment>
<comment type="domain">
    <text evidence="1">The large subunit is composed of 2 ATP-grasp domains that are involved in binding the 2 ATP molecules needed for carbamoyl phosphate synthesis. The N-terminal ATP-grasp domain (referred to as the carboxyphosphate synthetic component) catalyzes the ATP-dependent phosphorylation of hydrogencarbonate to carboxyphosphate and the subsequent nucleophilic attack by ammonia to form a carbamate intermediate. The C-terminal ATP-grasp domain (referred to as the carbamoyl phosphate synthetic component) then catalyzes the phosphorylation of carbamate with the second ATP to form the end product carbamoyl phosphate. The reactive and unstable enzyme intermediates are sequentially channeled from one active site to the next through the interior of the protein over a distance of at least 96 A.</text>
</comment>
<comment type="similarity">
    <text evidence="1">Belongs to the CarB family.</text>
</comment>